<comment type="function">
    <text evidence="1">Involved in the processing of the 20S pre-rRNA.</text>
</comment>
<comment type="subcellular location">
    <subcellularLocation>
        <location evidence="1">Nucleus</location>
        <location evidence="1">Nucleolus</location>
    </subcellularLocation>
</comment>
<comment type="similarity">
    <text evidence="4">Belongs to the FYV7 family.</text>
</comment>
<dbReference type="EMBL" id="CR382131">
    <property type="protein sequence ID" value="CAG79948.1"/>
    <property type="molecule type" value="Genomic_DNA"/>
</dbReference>
<dbReference type="RefSeq" id="XP_504349.1">
    <property type="nucleotide sequence ID" value="XM_504349.1"/>
</dbReference>
<dbReference type="SMR" id="Q6C4R3"/>
<dbReference type="FunCoup" id="Q6C4R3">
    <property type="interactions" value="82"/>
</dbReference>
<dbReference type="STRING" id="284591.Q6C4R3"/>
<dbReference type="EnsemblFungi" id="CAG79948">
    <property type="protein sequence ID" value="CAG79948"/>
    <property type="gene ID" value="YALI0_E24365g"/>
</dbReference>
<dbReference type="KEGG" id="yli:2912546"/>
<dbReference type="VEuPathDB" id="FungiDB:YALI0_E24365g"/>
<dbReference type="HOGENOM" id="CLU_105541_0_0_1"/>
<dbReference type="InParanoid" id="Q6C4R3"/>
<dbReference type="OrthoDB" id="123520at4891"/>
<dbReference type="Proteomes" id="UP000001300">
    <property type="component" value="Chromosome E"/>
</dbReference>
<dbReference type="GO" id="GO:0005730">
    <property type="term" value="C:nucleolus"/>
    <property type="evidence" value="ECO:0007669"/>
    <property type="project" value="UniProtKB-SubCell"/>
</dbReference>
<dbReference type="GO" id="GO:0006364">
    <property type="term" value="P:rRNA processing"/>
    <property type="evidence" value="ECO:0007669"/>
    <property type="project" value="UniProtKB-KW"/>
</dbReference>
<dbReference type="InterPro" id="IPR013730">
    <property type="entry name" value="Fyv7/TAP26"/>
</dbReference>
<dbReference type="PANTHER" id="PTHR15657">
    <property type="entry name" value="THYROID TRANSCRIPTION FACTOR 1-ASSOCIATED PROTEIN 26"/>
    <property type="match status" value="1"/>
</dbReference>
<dbReference type="PANTHER" id="PTHR15657:SF1">
    <property type="entry name" value="THYROID TRANSCRIPTION FACTOR 1-ASSOCIATED PROTEIN 26"/>
    <property type="match status" value="1"/>
</dbReference>
<dbReference type="Pfam" id="PF08524">
    <property type="entry name" value="rRNA_processing"/>
    <property type="match status" value="1"/>
</dbReference>
<reference key="1">
    <citation type="journal article" date="2004" name="Nature">
        <title>Genome evolution in yeasts.</title>
        <authorList>
            <person name="Dujon B."/>
            <person name="Sherman D."/>
            <person name="Fischer G."/>
            <person name="Durrens P."/>
            <person name="Casaregola S."/>
            <person name="Lafontaine I."/>
            <person name="de Montigny J."/>
            <person name="Marck C."/>
            <person name="Neuveglise C."/>
            <person name="Talla E."/>
            <person name="Goffard N."/>
            <person name="Frangeul L."/>
            <person name="Aigle M."/>
            <person name="Anthouard V."/>
            <person name="Babour A."/>
            <person name="Barbe V."/>
            <person name="Barnay S."/>
            <person name="Blanchin S."/>
            <person name="Beckerich J.-M."/>
            <person name="Beyne E."/>
            <person name="Bleykasten C."/>
            <person name="Boisrame A."/>
            <person name="Boyer J."/>
            <person name="Cattolico L."/>
            <person name="Confanioleri F."/>
            <person name="de Daruvar A."/>
            <person name="Despons L."/>
            <person name="Fabre E."/>
            <person name="Fairhead C."/>
            <person name="Ferry-Dumazet H."/>
            <person name="Groppi A."/>
            <person name="Hantraye F."/>
            <person name="Hennequin C."/>
            <person name="Jauniaux N."/>
            <person name="Joyet P."/>
            <person name="Kachouri R."/>
            <person name="Kerrest A."/>
            <person name="Koszul R."/>
            <person name="Lemaire M."/>
            <person name="Lesur I."/>
            <person name="Ma L."/>
            <person name="Muller H."/>
            <person name="Nicaud J.-M."/>
            <person name="Nikolski M."/>
            <person name="Oztas S."/>
            <person name="Ozier-Kalogeropoulos O."/>
            <person name="Pellenz S."/>
            <person name="Potier S."/>
            <person name="Richard G.-F."/>
            <person name="Straub M.-L."/>
            <person name="Suleau A."/>
            <person name="Swennen D."/>
            <person name="Tekaia F."/>
            <person name="Wesolowski-Louvel M."/>
            <person name="Westhof E."/>
            <person name="Wirth B."/>
            <person name="Zeniou-Meyer M."/>
            <person name="Zivanovic Y."/>
            <person name="Bolotin-Fukuhara M."/>
            <person name="Thierry A."/>
            <person name="Bouchier C."/>
            <person name="Caudron B."/>
            <person name="Scarpelli C."/>
            <person name="Gaillardin C."/>
            <person name="Weissenbach J."/>
            <person name="Wincker P."/>
            <person name="Souciet J.-L."/>
        </authorList>
    </citation>
    <scope>NUCLEOTIDE SEQUENCE [LARGE SCALE GENOMIC DNA]</scope>
    <source>
        <strain>CLIB 122 / E 150</strain>
    </source>
</reference>
<proteinExistence type="inferred from homology"/>
<accession>Q6C4R3</accession>
<protein>
    <recommendedName>
        <fullName>rRNA-processing protein FYV7</fullName>
    </recommendedName>
</protein>
<name>FYV7_YARLI</name>
<sequence>MAQEKNQHKRQGNSFYGGRPRHTQNRHKAKLDEIKKSLTHRSNVKRNYFKMLKKEGLSIPERESKFSEDKPETVEKAEDESGDESEGSAGSEEDEEQQGGFFEGEASGSEADDLEDGSDDDEKDKEDQSAKRRKPLPDQQPPTKQQLREMHESQKPRKPMNFKERAALAKERKQKAREEREAQIQKNKEDRERKLKKRAKLTKQMTKTTRTGQPLMTPRINKILDQLKQ</sequence>
<keyword id="KW-0175">Coiled coil</keyword>
<keyword id="KW-0539">Nucleus</keyword>
<keyword id="KW-1185">Reference proteome</keyword>
<keyword id="KW-0698">rRNA processing</keyword>
<organism>
    <name type="scientific">Yarrowia lipolytica (strain CLIB 122 / E 150)</name>
    <name type="common">Yeast</name>
    <name type="synonym">Candida lipolytica</name>
    <dbReference type="NCBI Taxonomy" id="284591"/>
    <lineage>
        <taxon>Eukaryota</taxon>
        <taxon>Fungi</taxon>
        <taxon>Dikarya</taxon>
        <taxon>Ascomycota</taxon>
        <taxon>Saccharomycotina</taxon>
        <taxon>Dipodascomycetes</taxon>
        <taxon>Dipodascales</taxon>
        <taxon>Dipodascales incertae sedis</taxon>
        <taxon>Yarrowia</taxon>
    </lineage>
</organism>
<evidence type="ECO:0000250" key="1"/>
<evidence type="ECO:0000255" key="2"/>
<evidence type="ECO:0000256" key="3">
    <source>
        <dbReference type="SAM" id="MobiDB-lite"/>
    </source>
</evidence>
<evidence type="ECO:0000305" key="4"/>
<feature type="chain" id="PRO_0000087403" description="rRNA-processing protein FYV7">
    <location>
        <begin position="1"/>
        <end position="229"/>
    </location>
</feature>
<feature type="region of interest" description="Disordered" evidence="3">
    <location>
        <begin position="1"/>
        <end position="229"/>
    </location>
</feature>
<feature type="coiled-coil region" evidence="2">
    <location>
        <begin position="160"/>
        <end position="208"/>
    </location>
</feature>
<feature type="compositionally biased region" description="Basic residues" evidence="3">
    <location>
        <begin position="19"/>
        <end position="29"/>
    </location>
</feature>
<feature type="compositionally biased region" description="Basic residues" evidence="3">
    <location>
        <begin position="37"/>
        <end position="48"/>
    </location>
</feature>
<feature type="compositionally biased region" description="Basic and acidic residues" evidence="3">
    <location>
        <begin position="52"/>
        <end position="76"/>
    </location>
</feature>
<feature type="compositionally biased region" description="Acidic residues" evidence="3">
    <location>
        <begin position="77"/>
        <end position="97"/>
    </location>
</feature>
<feature type="compositionally biased region" description="Low complexity" evidence="3">
    <location>
        <begin position="98"/>
        <end position="109"/>
    </location>
</feature>
<feature type="compositionally biased region" description="Acidic residues" evidence="3">
    <location>
        <begin position="110"/>
        <end position="124"/>
    </location>
</feature>
<feature type="compositionally biased region" description="Basic and acidic residues" evidence="3">
    <location>
        <begin position="146"/>
        <end position="193"/>
    </location>
</feature>
<feature type="compositionally biased region" description="Polar residues" evidence="3">
    <location>
        <begin position="203"/>
        <end position="214"/>
    </location>
</feature>
<gene>
    <name type="primary">FYV7</name>
    <name type="ordered locus">YALI0E24365g</name>
</gene>